<accession>P58700</accession>
<accession>Q0WJL3</accession>
<gene>
    <name type="primary">trpR</name>
    <name type="ordered locus">YPO0453</name>
    <name type="ordered locus">y3726</name>
    <name type="ordered locus">YP_3730</name>
</gene>
<sequence>MTDEKQVSDSLNRQTAGNPYSAADPALSAEDNQHWLSFVALLQNAITQDLHLPLLQLMLTPDERTALGTRVRIIEELMRGELSQRELKSQLGAGIATITRGSNSLKTAPPQLKSWLEAQLLANKR</sequence>
<feature type="chain" id="PRO_0000196505" description="Trp operon repressor">
    <location>
        <begin position="1"/>
        <end position="125"/>
    </location>
</feature>
<feature type="DNA-binding region" evidence="1">
    <location>
        <begin position="84"/>
        <end position="107"/>
    </location>
</feature>
<feature type="region of interest" description="Disordered" evidence="2">
    <location>
        <begin position="1"/>
        <end position="25"/>
    </location>
</feature>
<feature type="compositionally biased region" description="Polar residues" evidence="2">
    <location>
        <begin position="8"/>
        <end position="18"/>
    </location>
</feature>
<proteinExistence type="inferred from homology"/>
<reference key="1">
    <citation type="journal article" date="2001" name="Nature">
        <title>Genome sequence of Yersinia pestis, the causative agent of plague.</title>
        <authorList>
            <person name="Parkhill J."/>
            <person name="Wren B.W."/>
            <person name="Thomson N.R."/>
            <person name="Titball R.W."/>
            <person name="Holden M.T.G."/>
            <person name="Prentice M.B."/>
            <person name="Sebaihia M."/>
            <person name="James K.D."/>
            <person name="Churcher C.M."/>
            <person name="Mungall K.L."/>
            <person name="Baker S."/>
            <person name="Basham D."/>
            <person name="Bentley S.D."/>
            <person name="Brooks K."/>
            <person name="Cerdeno-Tarraga A.-M."/>
            <person name="Chillingworth T."/>
            <person name="Cronin A."/>
            <person name="Davies R.M."/>
            <person name="Davis P."/>
            <person name="Dougan G."/>
            <person name="Feltwell T."/>
            <person name="Hamlin N."/>
            <person name="Holroyd S."/>
            <person name="Jagels K."/>
            <person name="Karlyshev A.V."/>
            <person name="Leather S."/>
            <person name="Moule S."/>
            <person name="Oyston P.C.F."/>
            <person name="Quail M.A."/>
            <person name="Rutherford K.M."/>
            <person name="Simmonds M."/>
            <person name="Skelton J."/>
            <person name="Stevens K."/>
            <person name="Whitehead S."/>
            <person name="Barrell B.G."/>
        </authorList>
    </citation>
    <scope>NUCLEOTIDE SEQUENCE [LARGE SCALE GENOMIC DNA]</scope>
    <source>
        <strain>CO-92 / Biovar Orientalis</strain>
    </source>
</reference>
<reference key="2">
    <citation type="journal article" date="2002" name="J. Bacteriol.">
        <title>Genome sequence of Yersinia pestis KIM.</title>
        <authorList>
            <person name="Deng W."/>
            <person name="Burland V."/>
            <person name="Plunkett G. III"/>
            <person name="Boutin A."/>
            <person name="Mayhew G.F."/>
            <person name="Liss P."/>
            <person name="Perna N.T."/>
            <person name="Rose D.J."/>
            <person name="Mau B."/>
            <person name="Zhou S."/>
            <person name="Schwartz D.C."/>
            <person name="Fetherston J.D."/>
            <person name="Lindler L.E."/>
            <person name="Brubaker R.R."/>
            <person name="Plano G.V."/>
            <person name="Straley S.C."/>
            <person name="McDonough K.A."/>
            <person name="Nilles M.L."/>
            <person name="Matson J.S."/>
            <person name="Blattner F.R."/>
            <person name="Perry R.D."/>
        </authorList>
    </citation>
    <scope>NUCLEOTIDE SEQUENCE [LARGE SCALE GENOMIC DNA]</scope>
    <source>
        <strain>KIM10+ / Biovar Mediaevalis</strain>
    </source>
</reference>
<reference key="3">
    <citation type="journal article" date="2004" name="DNA Res.">
        <title>Complete genome sequence of Yersinia pestis strain 91001, an isolate avirulent to humans.</title>
        <authorList>
            <person name="Song Y."/>
            <person name="Tong Z."/>
            <person name="Wang J."/>
            <person name="Wang L."/>
            <person name="Guo Z."/>
            <person name="Han Y."/>
            <person name="Zhang J."/>
            <person name="Pei D."/>
            <person name="Zhou D."/>
            <person name="Qin H."/>
            <person name="Pang X."/>
            <person name="Han Y."/>
            <person name="Zhai J."/>
            <person name="Li M."/>
            <person name="Cui B."/>
            <person name="Qi Z."/>
            <person name="Jin L."/>
            <person name="Dai R."/>
            <person name="Chen F."/>
            <person name="Li S."/>
            <person name="Ye C."/>
            <person name="Du Z."/>
            <person name="Lin W."/>
            <person name="Wang J."/>
            <person name="Yu J."/>
            <person name="Yang H."/>
            <person name="Wang J."/>
            <person name="Huang P."/>
            <person name="Yang R."/>
        </authorList>
    </citation>
    <scope>NUCLEOTIDE SEQUENCE [LARGE SCALE GENOMIC DNA]</scope>
    <source>
        <strain>91001 / Biovar Mediaevalis</strain>
    </source>
</reference>
<name>TRPR_YERPE</name>
<comment type="function">
    <text evidence="1">This protein is an aporepressor. When complexed with L-tryptophan it binds the operator region of the trp operon (5'-ACTAGT-'3') and prevents the initiation of transcription. The complex also regulates trp repressor biosynthesis by binding to its regulatory region (By similarity).</text>
</comment>
<comment type="subcellular location">
    <subcellularLocation>
        <location evidence="1">Cytoplasm</location>
    </subcellularLocation>
</comment>
<comment type="similarity">
    <text evidence="3">Belongs to the TrpR family.</text>
</comment>
<comment type="sequence caution" evidence="3">
    <conflict type="erroneous initiation">
        <sequence resource="EMBL-CDS" id="AAM87274"/>
    </conflict>
</comment>
<comment type="sequence caution" evidence="3">
    <conflict type="erroneous initiation">
        <sequence resource="EMBL-CDS" id="AAS63878"/>
    </conflict>
</comment>
<protein>
    <recommendedName>
        <fullName>Trp operon repressor</fullName>
    </recommendedName>
</protein>
<organism>
    <name type="scientific">Yersinia pestis</name>
    <dbReference type="NCBI Taxonomy" id="632"/>
    <lineage>
        <taxon>Bacteria</taxon>
        <taxon>Pseudomonadati</taxon>
        <taxon>Pseudomonadota</taxon>
        <taxon>Gammaproteobacteria</taxon>
        <taxon>Enterobacterales</taxon>
        <taxon>Yersiniaceae</taxon>
        <taxon>Yersinia</taxon>
    </lineage>
</organism>
<dbReference type="EMBL" id="AL590842">
    <property type="protein sequence ID" value="CAL19132.1"/>
    <property type="molecule type" value="Genomic_DNA"/>
</dbReference>
<dbReference type="EMBL" id="AE009952">
    <property type="protein sequence ID" value="AAM87274.1"/>
    <property type="status" value="ALT_INIT"/>
    <property type="molecule type" value="Genomic_DNA"/>
</dbReference>
<dbReference type="EMBL" id="AE017042">
    <property type="protein sequence ID" value="AAS63878.1"/>
    <property type="status" value="ALT_INIT"/>
    <property type="molecule type" value="Genomic_DNA"/>
</dbReference>
<dbReference type="PIR" id="AB0056">
    <property type="entry name" value="AB0056"/>
</dbReference>
<dbReference type="RefSeq" id="YP_002345525.1">
    <property type="nucleotide sequence ID" value="NC_003143.1"/>
</dbReference>
<dbReference type="SMR" id="P58700"/>
<dbReference type="IntAct" id="P58700">
    <property type="interactions" value="2"/>
</dbReference>
<dbReference type="STRING" id="214092.YPO0453"/>
<dbReference type="PaxDb" id="214092-YPO0453"/>
<dbReference type="DNASU" id="1148673"/>
<dbReference type="EnsemblBacteria" id="AAS63878">
    <property type="protein sequence ID" value="AAS63878"/>
    <property type="gene ID" value="YP_3730"/>
</dbReference>
<dbReference type="KEGG" id="ype:YPO0453"/>
<dbReference type="KEGG" id="ypk:y3726"/>
<dbReference type="KEGG" id="ypm:YP_3730"/>
<dbReference type="PATRIC" id="fig|214092.21.peg.697"/>
<dbReference type="eggNOG" id="COG2973">
    <property type="taxonomic scope" value="Bacteria"/>
</dbReference>
<dbReference type="HOGENOM" id="CLU_147939_0_0_6"/>
<dbReference type="OMA" id="MSHEPEY"/>
<dbReference type="OrthoDB" id="5704033at2"/>
<dbReference type="Proteomes" id="UP000000815">
    <property type="component" value="Chromosome"/>
</dbReference>
<dbReference type="Proteomes" id="UP000001019">
    <property type="component" value="Chromosome"/>
</dbReference>
<dbReference type="Proteomes" id="UP000002490">
    <property type="component" value="Chromosome"/>
</dbReference>
<dbReference type="GO" id="GO:0005737">
    <property type="term" value="C:cytoplasm"/>
    <property type="evidence" value="ECO:0007669"/>
    <property type="project" value="UniProtKB-SubCell"/>
</dbReference>
<dbReference type="GO" id="GO:0003700">
    <property type="term" value="F:DNA-binding transcription factor activity"/>
    <property type="evidence" value="ECO:0007669"/>
    <property type="project" value="InterPro"/>
</dbReference>
<dbReference type="GO" id="GO:0043565">
    <property type="term" value="F:sequence-specific DNA binding"/>
    <property type="evidence" value="ECO:0000318"/>
    <property type="project" value="GO_Central"/>
</dbReference>
<dbReference type="GO" id="GO:0045892">
    <property type="term" value="P:negative regulation of DNA-templated transcription"/>
    <property type="evidence" value="ECO:0007669"/>
    <property type="project" value="UniProtKB-UniRule"/>
</dbReference>
<dbReference type="GO" id="GO:0006355">
    <property type="term" value="P:regulation of DNA-templated transcription"/>
    <property type="evidence" value="ECO:0000318"/>
    <property type="project" value="GO_Central"/>
</dbReference>
<dbReference type="FunFam" id="1.10.1270.10:FF:000001">
    <property type="entry name" value="Trp operon repressor"/>
    <property type="match status" value="1"/>
</dbReference>
<dbReference type="Gene3D" id="1.10.1270.10">
    <property type="entry name" value="TrpR-like"/>
    <property type="match status" value="1"/>
</dbReference>
<dbReference type="HAMAP" id="MF_00475">
    <property type="entry name" value="Trp_repressor"/>
    <property type="match status" value="1"/>
</dbReference>
<dbReference type="InterPro" id="IPR000831">
    <property type="entry name" value="Trp_repress"/>
</dbReference>
<dbReference type="InterPro" id="IPR013335">
    <property type="entry name" value="Trp_repress_bac"/>
</dbReference>
<dbReference type="InterPro" id="IPR010921">
    <property type="entry name" value="Trp_repressor/repl_initiator"/>
</dbReference>
<dbReference type="InterPro" id="IPR038116">
    <property type="entry name" value="TrpR-like_sf"/>
</dbReference>
<dbReference type="NCBIfam" id="TIGR01321">
    <property type="entry name" value="TrpR"/>
    <property type="match status" value="1"/>
</dbReference>
<dbReference type="PANTHER" id="PTHR38025">
    <property type="entry name" value="TRP OPERON REPRESSOR"/>
    <property type="match status" value="1"/>
</dbReference>
<dbReference type="PANTHER" id="PTHR38025:SF1">
    <property type="entry name" value="TRP OPERON REPRESSOR"/>
    <property type="match status" value="1"/>
</dbReference>
<dbReference type="Pfam" id="PF01371">
    <property type="entry name" value="Trp_repressor"/>
    <property type="match status" value="1"/>
</dbReference>
<dbReference type="SUPFAM" id="SSF48295">
    <property type="entry name" value="TrpR-like"/>
    <property type="match status" value="1"/>
</dbReference>
<evidence type="ECO:0000250" key="1"/>
<evidence type="ECO:0000256" key="2">
    <source>
        <dbReference type="SAM" id="MobiDB-lite"/>
    </source>
</evidence>
<evidence type="ECO:0000305" key="3"/>
<keyword id="KW-0963">Cytoplasm</keyword>
<keyword id="KW-0238">DNA-binding</keyword>
<keyword id="KW-1185">Reference proteome</keyword>
<keyword id="KW-0678">Repressor</keyword>
<keyword id="KW-0804">Transcription</keyword>
<keyword id="KW-0805">Transcription regulation</keyword>